<keyword id="KW-0067">ATP-binding</keyword>
<keyword id="KW-0436">Ligase</keyword>
<keyword id="KW-0460">Magnesium</keyword>
<keyword id="KW-0479">Metal-binding</keyword>
<keyword id="KW-0547">Nucleotide-binding</keyword>
<keyword id="KW-0816">Tricarboxylic acid cycle</keyword>
<accession>B3PQ90</accession>
<dbReference type="EC" id="6.2.1.5" evidence="1"/>
<dbReference type="EMBL" id="CP001074">
    <property type="protein sequence ID" value="ACE93102.1"/>
    <property type="molecule type" value="Genomic_DNA"/>
</dbReference>
<dbReference type="SMR" id="B3PQ90"/>
<dbReference type="KEGG" id="rec:RHECIAT_CH0004173"/>
<dbReference type="eggNOG" id="COG0045">
    <property type="taxonomic scope" value="Bacteria"/>
</dbReference>
<dbReference type="HOGENOM" id="CLU_037430_0_2_5"/>
<dbReference type="UniPathway" id="UPA00223">
    <property type="reaction ID" value="UER00999"/>
</dbReference>
<dbReference type="Proteomes" id="UP000008817">
    <property type="component" value="Chromosome"/>
</dbReference>
<dbReference type="GO" id="GO:0005829">
    <property type="term" value="C:cytosol"/>
    <property type="evidence" value="ECO:0007669"/>
    <property type="project" value="TreeGrafter"/>
</dbReference>
<dbReference type="GO" id="GO:0042709">
    <property type="term" value="C:succinate-CoA ligase complex"/>
    <property type="evidence" value="ECO:0007669"/>
    <property type="project" value="TreeGrafter"/>
</dbReference>
<dbReference type="GO" id="GO:0005524">
    <property type="term" value="F:ATP binding"/>
    <property type="evidence" value="ECO:0007669"/>
    <property type="project" value="UniProtKB-UniRule"/>
</dbReference>
<dbReference type="GO" id="GO:0000287">
    <property type="term" value="F:magnesium ion binding"/>
    <property type="evidence" value="ECO:0007669"/>
    <property type="project" value="UniProtKB-UniRule"/>
</dbReference>
<dbReference type="GO" id="GO:0004775">
    <property type="term" value="F:succinate-CoA ligase (ADP-forming) activity"/>
    <property type="evidence" value="ECO:0007669"/>
    <property type="project" value="UniProtKB-UniRule"/>
</dbReference>
<dbReference type="GO" id="GO:0004776">
    <property type="term" value="F:succinate-CoA ligase (GDP-forming) activity"/>
    <property type="evidence" value="ECO:0007669"/>
    <property type="project" value="RHEA"/>
</dbReference>
<dbReference type="GO" id="GO:0006104">
    <property type="term" value="P:succinyl-CoA metabolic process"/>
    <property type="evidence" value="ECO:0007669"/>
    <property type="project" value="TreeGrafter"/>
</dbReference>
<dbReference type="GO" id="GO:0006099">
    <property type="term" value="P:tricarboxylic acid cycle"/>
    <property type="evidence" value="ECO:0007669"/>
    <property type="project" value="UniProtKB-UniRule"/>
</dbReference>
<dbReference type="FunFam" id="3.30.1490.20:FF:000002">
    <property type="entry name" value="Succinate--CoA ligase [ADP-forming] subunit beta"/>
    <property type="match status" value="1"/>
</dbReference>
<dbReference type="FunFam" id="3.30.470.20:FF:000002">
    <property type="entry name" value="Succinate--CoA ligase [ADP-forming] subunit beta"/>
    <property type="match status" value="1"/>
</dbReference>
<dbReference type="FunFam" id="3.40.50.261:FF:000001">
    <property type="entry name" value="Succinate--CoA ligase [ADP-forming] subunit beta"/>
    <property type="match status" value="1"/>
</dbReference>
<dbReference type="Gene3D" id="3.30.1490.20">
    <property type="entry name" value="ATP-grasp fold, A domain"/>
    <property type="match status" value="1"/>
</dbReference>
<dbReference type="Gene3D" id="3.30.470.20">
    <property type="entry name" value="ATP-grasp fold, B domain"/>
    <property type="match status" value="1"/>
</dbReference>
<dbReference type="Gene3D" id="3.40.50.261">
    <property type="entry name" value="Succinyl-CoA synthetase domains"/>
    <property type="match status" value="1"/>
</dbReference>
<dbReference type="HAMAP" id="MF_00558">
    <property type="entry name" value="Succ_CoA_beta"/>
    <property type="match status" value="1"/>
</dbReference>
<dbReference type="InterPro" id="IPR011761">
    <property type="entry name" value="ATP-grasp"/>
</dbReference>
<dbReference type="InterPro" id="IPR013650">
    <property type="entry name" value="ATP-grasp_succ-CoA_synth-type"/>
</dbReference>
<dbReference type="InterPro" id="IPR013815">
    <property type="entry name" value="ATP_grasp_subdomain_1"/>
</dbReference>
<dbReference type="InterPro" id="IPR017866">
    <property type="entry name" value="Succ-CoA_synthase_bsu_CS"/>
</dbReference>
<dbReference type="InterPro" id="IPR005811">
    <property type="entry name" value="SUCC_ACL_C"/>
</dbReference>
<dbReference type="InterPro" id="IPR005809">
    <property type="entry name" value="Succ_CoA_ligase-like_bsu"/>
</dbReference>
<dbReference type="InterPro" id="IPR016102">
    <property type="entry name" value="Succinyl-CoA_synth-like"/>
</dbReference>
<dbReference type="NCBIfam" id="NF001913">
    <property type="entry name" value="PRK00696.1"/>
    <property type="match status" value="1"/>
</dbReference>
<dbReference type="NCBIfam" id="TIGR01016">
    <property type="entry name" value="sucCoAbeta"/>
    <property type="match status" value="1"/>
</dbReference>
<dbReference type="PANTHER" id="PTHR11815:SF10">
    <property type="entry name" value="SUCCINATE--COA LIGASE [GDP-FORMING] SUBUNIT BETA, MITOCHONDRIAL"/>
    <property type="match status" value="1"/>
</dbReference>
<dbReference type="PANTHER" id="PTHR11815">
    <property type="entry name" value="SUCCINYL-COA SYNTHETASE BETA CHAIN"/>
    <property type="match status" value="1"/>
</dbReference>
<dbReference type="Pfam" id="PF08442">
    <property type="entry name" value="ATP-grasp_2"/>
    <property type="match status" value="1"/>
</dbReference>
<dbReference type="Pfam" id="PF00549">
    <property type="entry name" value="Ligase_CoA"/>
    <property type="match status" value="1"/>
</dbReference>
<dbReference type="PIRSF" id="PIRSF001554">
    <property type="entry name" value="SucCS_beta"/>
    <property type="match status" value="1"/>
</dbReference>
<dbReference type="SUPFAM" id="SSF56059">
    <property type="entry name" value="Glutathione synthetase ATP-binding domain-like"/>
    <property type="match status" value="1"/>
</dbReference>
<dbReference type="SUPFAM" id="SSF52210">
    <property type="entry name" value="Succinyl-CoA synthetase domains"/>
    <property type="match status" value="1"/>
</dbReference>
<dbReference type="PROSITE" id="PS50975">
    <property type="entry name" value="ATP_GRASP"/>
    <property type="match status" value="1"/>
</dbReference>
<dbReference type="PROSITE" id="PS01217">
    <property type="entry name" value="SUCCINYL_COA_LIG_3"/>
    <property type="match status" value="1"/>
</dbReference>
<proteinExistence type="inferred from homology"/>
<name>SUCC_RHIE6</name>
<feature type="chain" id="PRO_1000129216" description="Succinate--CoA ligase [ADP-forming] subunit beta">
    <location>
        <begin position="1"/>
        <end position="397"/>
    </location>
</feature>
<feature type="domain" description="ATP-grasp" evidence="1">
    <location>
        <begin position="9"/>
        <end position="254"/>
    </location>
</feature>
<feature type="binding site" evidence="1">
    <location>
        <position position="46"/>
    </location>
    <ligand>
        <name>ATP</name>
        <dbReference type="ChEBI" id="CHEBI:30616"/>
    </ligand>
</feature>
<feature type="binding site" evidence="1">
    <location>
        <begin position="53"/>
        <end position="55"/>
    </location>
    <ligand>
        <name>ATP</name>
        <dbReference type="ChEBI" id="CHEBI:30616"/>
    </ligand>
</feature>
<feature type="binding site" evidence="1">
    <location>
        <position position="109"/>
    </location>
    <ligand>
        <name>ATP</name>
        <dbReference type="ChEBI" id="CHEBI:30616"/>
    </ligand>
</feature>
<feature type="binding site" evidence="1">
    <location>
        <position position="112"/>
    </location>
    <ligand>
        <name>ATP</name>
        <dbReference type="ChEBI" id="CHEBI:30616"/>
    </ligand>
</feature>
<feature type="binding site" evidence="1">
    <location>
        <position position="117"/>
    </location>
    <ligand>
        <name>ATP</name>
        <dbReference type="ChEBI" id="CHEBI:30616"/>
    </ligand>
</feature>
<feature type="binding site" evidence="1">
    <location>
        <position position="209"/>
    </location>
    <ligand>
        <name>Mg(2+)</name>
        <dbReference type="ChEBI" id="CHEBI:18420"/>
    </ligand>
</feature>
<feature type="binding site" evidence="1">
    <location>
        <position position="223"/>
    </location>
    <ligand>
        <name>Mg(2+)</name>
        <dbReference type="ChEBI" id="CHEBI:18420"/>
    </ligand>
</feature>
<feature type="binding site" evidence="1">
    <location>
        <position position="274"/>
    </location>
    <ligand>
        <name>substrate</name>
        <note>ligand shared with subunit alpha</note>
    </ligand>
</feature>
<feature type="binding site" evidence="1">
    <location>
        <begin position="331"/>
        <end position="333"/>
    </location>
    <ligand>
        <name>substrate</name>
        <note>ligand shared with subunit alpha</note>
    </ligand>
</feature>
<comment type="function">
    <text evidence="1">Succinyl-CoA synthetase functions in the citric acid cycle (TCA), coupling the hydrolysis of succinyl-CoA to the synthesis of either ATP or GTP and thus represents the only step of substrate-level phosphorylation in the TCA. The beta subunit provides nucleotide specificity of the enzyme and binds the substrate succinate, while the binding sites for coenzyme A and phosphate are found in the alpha subunit.</text>
</comment>
<comment type="catalytic activity">
    <reaction evidence="1">
        <text>succinate + ATP + CoA = succinyl-CoA + ADP + phosphate</text>
        <dbReference type="Rhea" id="RHEA:17661"/>
        <dbReference type="ChEBI" id="CHEBI:30031"/>
        <dbReference type="ChEBI" id="CHEBI:30616"/>
        <dbReference type="ChEBI" id="CHEBI:43474"/>
        <dbReference type="ChEBI" id="CHEBI:57287"/>
        <dbReference type="ChEBI" id="CHEBI:57292"/>
        <dbReference type="ChEBI" id="CHEBI:456216"/>
        <dbReference type="EC" id="6.2.1.5"/>
    </reaction>
    <physiologicalReaction direction="right-to-left" evidence="1">
        <dbReference type="Rhea" id="RHEA:17663"/>
    </physiologicalReaction>
</comment>
<comment type="catalytic activity">
    <reaction evidence="1">
        <text>GTP + succinate + CoA = succinyl-CoA + GDP + phosphate</text>
        <dbReference type="Rhea" id="RHEA:22120"/>
        <dbReference type="ChEBI" id="CHEBI:30031"/>
        <dbReference type="ChEBI" id="CHEBI:37565"/>
        <dbReference type="ChEBI" id="CHEBI:43474"/>
        <dbReference type="ChEBI" id="CHEBI:57287"/>
        <dbReference type="ChEBI" id="CHEBI:57292"/>
        <dbReference type="ChEBI" id="CHEBI:58189"/>
    </reaction>
    <physiologicalReaction direction="right-to-left" evidence="1">
        <dbReference type="Rhea" id="RHEA:22122"/>
    </physiologicalReaction>
</comment>
<comment type="cofactor">
    <cofactor evidence="1">
        <name>Mg(2+)</name>
        <dbReference type="ChEBI" id="CHEBI:18420"/>
    </cofactor>
    <text evidence="1">Binds 1 Mg(2+) ion per subunit.</text>
</comment>
<comment type="pathway">
    <text evidence="1">Carbohydrate metabolism; tricarboxylic acid cycle; succinate from succinyl-CoA (ligase route): step 1/1.</text>
</comment>
<comment type="subunit">
    <text evidence="1">Heterotetramer of two alpha and two beta subunits.</text>
</comment>
<comment type="similarity">
    <text evidence="1">Belongs to the succinate/malate CoA ligase beta subunit family.</text>
</comment>
<reference key="1">
    <citation type="journal article" date="2010" name="Appl. Environ. Microbiol.">
        <title>Conserved symbiotic plasmid DNA sequences in the multireplicon pangenomic structure of Rhizobium etli.</title>
        <authorList>
            <person name="Gonzalez V."/>
            <person name="Acosta J.L."/>
            <person name="Santamaria R.I."/>
            <person name="Bustos P."/>
            <person name="Fernandez J.L."/>
            <person name="Hernandez Gonzalez I.L."/>
            <person name="Diaz R."/>
            <person name="Flores M."/>
            <person name="Palacios R."/>
            <person name="Mora J."/>
            <person name="Davila G."/>
        </authorList>
    </citation>
    <scope>NUCLEOTIDE SEQUENCE [LARGE SCALE GENOMIC DNA]</scope>
    <source>
        <strain>CIAT 652</strain>
    </source>
</reference>
<sequence>MNIHEYQAKALLKGYGAPVAEGVAILKAEEAEAAAKSLPGPLYVVKSQIHAGGRGKGKFKELSPEAKGGVRLAKSVEDVVANVKEMLGNTLVTAQTGEAGKQVNRLYIEDGADIERELYCSLLVDRSVGKVAFVVSTEGGMDIEAVAHDTPEKIQTIAIDPETGVTAADVAKISSALKLDGAAGEDAKSLFPLLYKAFNEKDMSLLEINPLIVMKNGHLRVLDAKMSFDGNALFRHDDVRALRDETEEDAKEIEASKWDLAYVALDGNIGCMVNGAGLAMATMDIIKLYGKEPANFCDVGGGAGKEKVAAAFKIITADPKVEGILVNIFGGIMKCDVIAEGVIAAVKEVGLKVPLVVRLEGTNVELGKKILNESGLAITAADDLDDAAKKIVAAING</sequence>
<evidence type="ECO:0000255" key="1">
    <source>
        <dbReference type="HAMAP-Rule" id="MF_00558"/>
    </source>
</evidence>
<gene>
    <name evidence="1" type="primary">sucC</name>
    <name type="ordered locus">RHECIAT_CH0004173</name>
</gene>
<organism>
    <name type="scientific">Rhizobium etli (strain CIAT 652)</name>
    <dbReference type="NCBI Taxonomy" id="491916"/>
    <lineage>
        <taxon>Bacteria</taxon>
        <taxon>Pseudomonadati</taxon>
        <taxon>Pseudomonadota</taxon>
        <taxon>Alphaproteobacteria</taxon>
        <taxon>Hyphomicrobiales</taxon>
        <taxon>Rhizobiaceae</taxon>
        <taxon>Rhizobium/Agrobacterium group</taxon>
        <taxon>Rhizobium</taxon>
    </lineage>
</organism>
<protein>
    <recommendedName>
        <fullName evidence="1">Succinate--CoA ligase [ADP-forming] subunit beta</fullName>
        <ecNumber evidence="1">6.2.1.5</ecNumber>
    </recommendedName>
    <alternativeName>
        <fullName evidence="1">Succinyl-CoA synthetase subunit beta</fullName>
        <shortName evidence="1">SCS-beta</shortName>
    </alternativeName>
</protein>